<keyword id="KW-0002">3D-structure</keyword>
<keyword id="KW-0037">Angiogenesis</keyword>
<keyword id="KW-0217">Developmental protein</keyword>
<keyword id="KW-0221">Differentiation</keyword>
<keyword id="KW-0306">Gastrulation</keyword>
<keyword id="KW-0325">Glycoprotein</keyword>
<keyword id="KW-0372">Hormone</keyword>
<keyword id="KW-1185">Reference proteome</keyword>
<keyword id="KW-0964">Secreted</keyword>
<keyword id="KW-0732">Signal</keyword>
<name>ELA_HUMAN</name>
<evidence type="ECO:0000250" key="1">
    <source>
        <dbReference type="UniProtKB" id="P0DMC2"/>
    </source>
</evidence>
<evidence type="ECO:0000250" key="2">
    <source>
        <dbReference type="UniProtKB" id="P0DMC4"/>
    </source>
</evidence>
<evidence type="ECO:0000250" key="3">
    <source>
        <dbReference type="UniProtKB" id="P0DP76"/>
    </source>
</evidence>
<evidence type="ECO:0000255" key="4"/>
<evidence type="ECO:0000269" key="5">
    <source>
    </source>
</evidence>
<evidence type="ECO:0000269" key="6">
    <source>
    </source>
</evidence>
<evidence type="ECO:0000269" key="7">
    <source>
    </source>
</evidence>
<evidence type="ECO:0000269" key="8">
    <source>
    </source>
</evidence>
<evidence type="ECO:0000269" key="9">
    <source>
    </source>
</evidence>
<evidence type="ECO:0000305" key="10"/>
<evidence type="ECO:0000305" key="11">
    <source>
    </source>
</evidence>
<evidence type="ECO:0000312" key="12">
    <source>
        <dbReference type="HGNC" id="HGNC:48925"/>
    </source>
</evidence>
<evidence type="ECO:0007744" key="13">
    <source>
        <dbReference type="PDB" id="7W0N"/>
    </source>
</evidence>
<evidence type="ECO:0007744" key="14">
    <source>
        <dbReference type="PDB" id="7W0O"/>
    </source>
</evidence>
<evidence type="ECO:0007744" key="15">
    <source>
        <dbReference type="PDB" id="7W0P"/>
    </source>
</evidence>
<evidence type="ECO:0007829" key="16">
    <source>
        <dbReference type="PDB" id="7W0P"/>
    </source>
</evidence>
<dbReference type="EMBL" id="AK092578">
    <property type="status" value="NOT_ANNOTATED_CDS"/>
    <property type="molecule type" value="mRNA"/>
</dbReference>
<dbReference type="EMBL" id="AC104620">
    <property type="status" value="NOT_ANNOTATED_CDS"/>
    <property type="molecule type" value="Genomic_DNA"/>
</dbReference>
<dbReference type="CCDS" id="CCDS77980.1"/>
<dbReference type="RefSeq" id="NP_001284479.1">
    <property type="nucleotide sequence ID" value="NM_001297550.2"/>
</dbReference>
<dbReference type="RefSeq" id="XP_016863112.1">
    <property type="nucleotide sequence ID" value="XM_017007623.2"/>
</dbReference>
<dbReference type="RefSeq" id="XP_054204663.1">
    <property type="nucleotide sequence ID" value="XM_054348688.1"/>
</dbReference>
<dbReference type="PDB" id="7W0N">
    <property type="method" value="EM"/>
    <property type="resolution" value="4.21 A"/>
    <property type="chains" value="D/E=23-54"/>
</dbReference>
<dbReference type="PDB" id="7W0O">
    <property type="method" value="EM"/>
    <property type="resolution" value="3.78 A"/>
    <property type="chains" value="D=23-54"/>
</dbReference>
<dbReference type="PDB" id="7W0P">
    <property type="method" value="EM"/>
    <property type="resolution" value="3.16 A"/>
    <property type="chains" value="D=23-54"/>
</dbReference>
<dbReference type="PDBsum" id="7W0N"/>
<dbReference type="PDBsum" id="7W0O"/>
<dbReference type="PDBsum" id="7W0P"/>
<dbReference type="EMDB" id="EMD-32245"/>
<dbReference type="EMDB" id="EMD-32246"/>
<dbReference type="EMDB" id="EMD-32247"/>
<dbReference type="SMR" id="P0DMC3"/>
<dbReference type="FunCoup" id="P0DMC3">
    <property type="interactions" value="728"/>
</dbReference>
<dbReference type="STRING" id="9606.ENSP00000484618"/>
<dbReference type="GlyCosmos" id="P0DMC3">
    <property type="glycosylation" value="1 site, No reported glycans"/>
</dbReference>
<dbReference type="GlyGen" id="P0DMC3">
    <property type="glycosylation" value="1 site"/>
</dbReference>
<dbReference type="BioMuta" id="APELA"/>
<dbReference type="PaxDb" id="9606-ENSP00000484618"/>
<dbReference type="PeptideAtlas" id="P0DMC3"/>
<dbReference type="DNASU" id="100506013"/>
<dbReference type="Ensembl" id="ENST00000507152.6">
    <property type="protein sequence ID" value="ENSP00000484618.1"/>
    <property type="gene ID" value="ENSG00000248329.6"/>
</dbReference>
<dbReference type="Ensembl" id="ENST00000510062.5">
    <property type="protein sequence ID" value="ENSP00000478306.1"/>
    <property type="gene ID" value="ENSG00000248329.6"/>
</dbReference>
<dbReference type="Ensembl" id="ENST00000515275.1">
    <property type="protein sequence ID" value="ENSP00000480045.1"/>
    <property type="gene ID" value="ENSG00000248329.6"/>
</dbReference>
<dbReference type="GeneID" id="100506013"/>
<dbReference type="KEGG" id="hsa:100506013"/>
<dbReference type="MANE-Select" id="ENST00000507152.6">
    <property type="protein sequence ID" value="ENSP00000484618.1"/>
    <property type="RefSeq nucleotide sequence ID" value="NM_001297550.2"/>
    <property type="RefSeq protein sequence ID" value="NP_001284479.1"/>
</dbReference>
<dbReference type="AGR" id="HGNC:48925"/>
<dbReference type="CTD" id="100506013"/>
<dbReference type="DisGeNET" id="100506013"/>
<dbReference type="GeneCards" id="APELA"/>
<dbReference type="HGNC" id="HGNC:48925">
    <property type="gene designation" value="APELA"/>
</dbReference>
<dbReference type="HPA" id="ENSG00000248329">
    <property type="expression patterns" value="Tissue enhanced (kidney, prostate)"/>
</dbReference>
<dbReference type="MIM" id="615594">
    <property type="type" value="gene"/>
</dbReference>
<dbReference type="neXtProt" id="NX_P0DMC3"/>
<dbReference type="OpenTargets" id="ENSG00000248329"/>
<dbReference type="VEuPathDB" id="HostDB:ENSG00000248329"/>
<dbReference type="eggNOG" id="ENOG502TDEQ">
    <property type="taxonomic scope" value="Eukaryota"/>
</dbReference>
<dbReference type="GeneTree" id="ENSGT00950000183347"/>
<dbReference type="HOGENOM" id="CLU_3049692_0_0_1"/>
<dbReference type="InParanoid" id="P0DMC3"/>
<dbReference type="OMA" id="GCSHRRC"/>
<dbReference type="OrthoDB" id="9922869at2759"/>
<dbReference type="PAN-GO" id="P0DMC3">
    <property type="GO annotations" value="3 GO annotations based on evolutionary models"/>
</dbReference>
<dbReference type="PathwayCommons" id="P0DMC3"/>
<dbReference type="BioGRID-ORCS" id="100506013">
    <property type="hits" value="2 hits in 102 CRISPR screens"/>
</dbReference>
<dbReference type="GenomeRNAi" id="100506013"/>
<dbReference type="Pharos" id="P0DMC3">
    <property type="development level" value="Tbio"/>
</dbReference>
<dbReference type="PRO" id="PR:P0DMC3"/>
<dbReference type="Proteomes" id="UP000005640">
    <property type="component" value="Chromosome 4"/>
</dbReference>
<dbReference type="RNAct" id="P0DMC3">
    <property type="molecule type" value="protein"/>
</dbReference>
<dbReference type="Bgee" id="ENSG00000248329">
    <property type="expression patterns" value="Expressed in tibia and 97 other cell types or tissues"/>
</dbReference>
<dbReference type="ExpressionAtlas" id="P0DMC3">
    <property type="expression patterns" value="baseline and differential"/>
</dbReference>
<dbReference type="GO" id="GO:0005576">
    <property type="term" value="C:extracellular region"/>
    <property type="evidence" value="ECO:0000314"/>
    <property type="project" value="UniProtKB"/>
</dbReference>
<dbReference type="GO" id="GO:0005615">
    <property type="term" value="C:extracellular space"/>
    <property type="evidence" value="ECO:0000314"/>
    <property type="project" value="UniProtKB"/>
</dbReference>
<dbReference type="GO" id="GO:0031704">
    <property type="term" value="F:apelin receptor binding"/>
    <property type="evidence" value="ECO:0000314"/>
    <property type="project" value="UniProtKB"/>
</dbReference>
<dbReference type="GO" id="GO:0005179">
    <property type="term" value="F:hormone activity"/>
    <property type="evidence" value="ECO:0000314"/>
    <property type="project" value="UniProtKB"/>
</dbReference>
<dbReference type="GO" id="GO:0007512">
    <property type="term" value="P:adult heart development"/>
    <property type="evidence" value="ECO:0000250"/>
    <property type="project" value="UniProtKB"/>
</dbReference>
<dbReference type="GO" id="GO:0001525">
    <property type="term" value="P:angiogenesis"/>
    <property type="evidence" value="ECO:0007669"/>
    <property type="project" value="UniProtKB-KW"/>
</dbReference>
<dbReference type="GO" id="GO:0060183">
    <property type="term" value="P:apelin receptor signaling pathway"/>
    <property type="evidence" value="ECO:0000314"/>
    <property type="project" value="UniProtKB"/>
</dbReference>
<dbReference type="GO" id="GO:0090134">
    <property type="term" value="P:cell migration involved in mesendoderm migration"/>
    <property type="evidence" value="ECO:0000250"/>
    <property type="project" value="UniProtKB"/>
</dbReference>
<dbReference type="GO" id="GO:0060976">
    <property type="term" value="P:coronary vasculature development"/>
    <property type="evidence" value="ECO:0000250"/>
    <property type="project" value="UniProtKB"/>
</dbReference>
<dbReference type="GO" id="GO:0035050">
    <property type="term" value="P:embryonic heart tube development"/>
    <property type="evidence" value="ECO:0000250"/>
    <property type="project" value="UniProtKB"/>
</dbReference>
<dbReference type="GO" id="GO:0007492">
    <property type="term" value="P:endoderm development"/>
    <property type="evidence" value="ECO:0000250"/>
    <property type="project" value="UniProtKB"/>
</dbReference>
<dbReference type="GO" id="GO:0007186">
    <property type="term" value="P:G protein-coupled receptor signaling pathway"/>
    <property type="evidence" value="ECO:0000314"/>
    <property type="project" value="UniProtKB"/>
</dbReference>
<dbReference type="GO" id="GO:0007507">
    <property type="term" value="P:heart development"/>
    <property type="evidence" value="ECO:0000250"/>
    <property type="project" value="UniProtKB"/>
</dbReference>
<dbReference type="GO" id="GO:0090133">
    <property type="term" value="P:mesendoderm migration"/>
    <property type="evidence" value="ECO:0000250"/>
    <property type="project" value="UniProtKB"/>
</dbReference>
<dbReference type="GO" id="GO:0007509">
    <property type="term" value="P:mesoderm migration involved in gastrulation"/>
    <property type="evidence" value="ECO:0000250"/>
    <property type="project" value="UniProtKB"/>
</dbReference>
<dbReference type="GO" id="GO:0060674">
    <property type="term" value="P:placenta blood vessel development"/>
    <property type="evidence" value="ECO:0000250"/>
    <property type="project" value="UniProtKB"/>
</dbReference>
<dbReference type="GO" id="GO:0045766">
    <property type="term" value="P:positive regulation of angiogenesis"/>
    <property type="evidence" value="ECO:0000315"/>
    <property type="project" value="UniProtKB"/>
</dbReference>
<dbReference type="GO" id="GO:1903589">
    <property type="term" value="P:positive regulation of blood vessel endothelial cell proliferation involved in sprouting angiogenesis"/>
    <property type="evidence" value="ECO:0000250"/>
    <property type="project" value="UniProtKB"/>
</dbReference>
<dbReference type="GO" id="GO:0070374">
    <property type="term" value="P:positive regulation of ERK1 and ERK2 cascade"/>
    <property type="evidence" value="ECO:0000250"/>
    <property type="project" value="UniProtKB"/>
</dbReference>
<dbReference type="GO" id="GO:1904022">
    <property type="term" value="P:positive regulation of G protein-coupled receptor internalization"/>
    <property type="evidence" value="ECO:0000315"/>
    <property type="project" value="UniProtKB"/>
</dbReference>
<dbReference type="GO" id="GO:0045823">
    <property type="term" value="P:positive regulation of heart contraction"/>
    <property type="evidence" value="ECO:0000250"/>
    <property type="project" value="UniProtKB"/>
</dbReference>
<dbReference type="GO" id="GO:1901165">
    <property type="term" value="P:positive regulation of trophoblast cell migration"/>
    <property type="evidence" value="ECO:0000315"/>
    <property type="project" value="UniProtKB"/>
</dbReference>
<dbReference type="GO" id="GO:0001570">
    <property type="term" value="P:vasculogenesis"/>
    <property type="evidence" value="ECO:0000250"/>
    <property type="project" value="UniProtKB"/>
</dbReference>
<dbReference type="CDD" id="cd20244">
    <property type="entry name" value="Toddler"/>
    <property type="match status" value="1"/>
</dbReference>
<dbReference type="InterPro" id="IPR047853">
    <property type="entry name" value="ELA"/>
</dbReference>
<dbReference type="Pfam" id="PF22050">
    <property type="entry name" value="Toddler"/>
    <property type="match status" value="1"/>
</dbReference>
<feature type="signal peptide" evidence="11">
    <location>
        <begin position="1"/>
        <end position="22"/>
    </location>
</feature>
<feature type="chain" id="PRO_0000425557" description="Apelin receptor early endogenous ligand">
    <location>
        <begin position="23"/>
        <end position="54"/>
    </location>
</feature>
<feature type="glycosylation site" description="N-linked (GlcNAc...) asparagine" evidence="4">
    <location>
        <position position="27"/>
    </location>
</feature>
<feature type="helix" evidence="16">
    <location>
        <begin position="45"/>
        <end position="48"/>
    </location>
</feature>
<proteinExistence type="evidence at protein level"/>
<organism>
    <name type="scientific">Homo sapiens</name>
    <name type="common">Human</name>
    <dbReference type="NCBI Taxonomy" id="9606"/>
    <lineage>
        <taxon>Eukaryota</taxon>
        <taxon>Metazoa</taxon>
        <taxon>Chordata</taxon>
        <taxon>Craniata</taxon>
        <taxon>Vertebrata</taxon>
        <taxon>Euteleostomi</taxon>
        <taxon>Mammalia</taxon>
        <taxon>Eutheria</taxon>
        <taxon>Euarchontoglires</taxon>
        <taxon>Primates</taxon>
        <taxon>Haplorrhini</taxon>
        <taxon>Catarrhini</taxon>
        <taxon>Hominidae</taxon>
        <taxon>Homo</taxon>
    </lineage>
</organism>
<gene>
    <name evidence="12" type="primary">APELA</name>
    <name type="synonym">ELA</name>
    <name type="synonym">TDL</name>
</gene>
<reference key="1">
    <citation type="journal article" date="2004" name="Nat. Genet.">
        <title>Complete sequencing and characterization of 21,243 full-length human cDNAs.</title>
        <authorList>
            <person name="Ota T."/>
            <person name="Suzuki Y."/>
            <person name="Nishikawa T."/>
            <person name="Otsuki T."/>
            <person name="Sugiyama T."/>
            <person name="Irie R."/>
            <person name="Wakamatsu A."/>
            <person name="Hayashi K."/>
            <person name="Sato H."/>
            <person name="Nagai K."/>
            <person name="Kimura K."/>
            <person name="Makita H."/>
            <person name="Sekine M."/>
            <person name="Obayashi M."/>
            <person name="Nishi T."/>
            <person name="Shibahara T."/>
            <person name="Tanaka T."/>
            <person name="Ishii S."/>
            <person name="Yamamoto J."/>
            <person name="Saito K."/>
            <person name="Kawai Y."/>
            <person name="Isono Y."/>
            <person name="Nakamura Y."/>
            <person name="Nagahari K."/>
            <person name="Murakami K."/>
            <person name="Yasuda T."/>
            <person name="Iwayanagi T."/>
            <person name="Wagatsuma M."/>
            <person name="Shiratori A."/>
            <person name="Sudo H."/>
            <person name="Hosoiri T."/>
            <person name="Kaku Y."/>
            <person name="Kodaira H."/>
            <person name="Kondo H."/>
            <person name="Sugawara M."/>
            <person name="Takahashi M."/>
            <person name="Kanda K."/>
            <person name="Yokoi T."/>
            <person name="Furuya T."/>
            <person name="Kikkawa E."/>
            <person name="Omura Y."/>
            <person name="Abe K."/>
            <person name="Kamihara K."/>
            <person name="Katsuta N."/>
            <person name="Sato K."/>
            <person name="Tanikawa M."/>
            <person name="Yamazaki M."/>
            <person name="Ninomiya K."/>
            <person name="Ishibashi T."/>
            <person name="Yamashita H."/>
            <person name="Murakawa K."/>
            <person name="Fujimori K."/>
            <person name="Tanai H."/>
            <person name="Kimata M."/>
            <person name="Watanabe M."/>
            <person name="Hiraoka S."/>
            <person name="Chiba Y."/>
            <person name="Ishida S."/>
            <person name="Ono Y."/>
            <person name="Takiguchi S."/>
            <person name="Watanabe S."/>
            <person name="Yosida M."/>
            <person name="Hotuta T."/>
            <person name="Kusano J."/>
            <person name="Kanehori K."/>
            <person name="Takahashi-Fujii A."/>
            <person name="Hara H."/>
            <person name="Tanase T.-O."/>
            <person name="Nomura Y."/>
            <person name="Togiya S."/>
            <person name="Komai F."/>
            <person name="Hara R."/>
            <person name="Takeuchi K."/>
            <person name="Arita M."/>
            <person name="Imose N."/>
            <person name="Musashino K."/>
            <person name="Yuuki H."/>
            <person name="Oshima A."/>
            <person name="Sasaki N."/>
            <person name="Aotsuka S."/>
            <person name="Yoshikawa Y."/>
            <person name="Matsunawa H."/>
            <person name="Ichihara T."/>
            <person name="Shiohata N."/>
            <person name="Sano S."/>
            <person name="Moriya S."/>
            <person name="Momiyama H."/>
            <person name="Satoh N."/>
            <person name="Takami S."/>
            <person name="Terashima Y."/>
            <person name="Suzuki O."/>
            <person name="Nakagawa S."/>
            <person name="Senoh A."/>
            <person name="Mizoguchi H."/>
            <person name="Goto Y."/>
            <person name="Shimizu F."/>
            <person name="Wakebe H."/>
            <person name="Hishigaki H."/>
            <person name="Watanabe T."/>
            <person name="Sugiyama A."/>
            <person name="Takemoto M."/>
            <person name="Kawakami B."/>
            <person name="Yamazaki M."/>
            <person name="Watanabe K."/>
            <person name="Kumagai A."/>
            <person name="Itakura S."/>
            <person name="Fukuzumi Y."/>
            <person name="Fujimori Y."/>
            <person name="Komiyama M."/>
            <person name="Tashiro H."/>
            <person name="Tanigami A."/>
            <person name="Fujiwara T."/>
            <person name="Ono T."/>
            <person name="Yamada K."/>
            <person name="Fujii Y."/>
            <person name="Ozaki K."/>
            <person name="Hirao M."/>
            <person name="Ohmori Y."/>
            <person name="Kawabata A."/>
            <person name="Hikiji T."/>
            <person name="Kobatake N."/>
            <person name="Inagaki H."/>
            <person name="Ikema Y."/>
            <person name="Okamoto S."/>
            <person name="Okitani R."/>
            <person name="Kawakami T."/>
            <person name="Noguchi S."/>
            <person name="Itoh T."/>
            <person name="Shigeta K."/>
            <person name="Senba T."/>
            <person name="Matsumura K."/>
            <person name="Nakajima Y."/>
            <person name="Mizuno T."/>
            <person name="Morinaga M."/>
            <person name="Sasaki M."/>
            <person name="Togashi T."/>
            <person name="Oyama M."/>
            <person name="Hata H."/>
            <person name="Watanabe M."/>
            <person name="Komatsu T."/>
            <person name="Mizushima-Sugano J."/>
            <person name="Satoh T."/>
            <person name="Shirai Y."/>
            <person name="Takahashi Y."/>
            <person name="Nakagawa K."/>
            <person name="Okumura K."/>
            <person name="Nagase T."/>
            <person name="Nomura N."/>
            <person name="Kikuchi H."/>
            <person name="Masuho Y."/>
            <person name="Yamashita R."/>
            <person name="Nakai K."/>
            <person name="Yada T."/>
            <person name="Nakamura Y."/>
            <person name="Ohara O."/>
            <person name="Isogai T."/>
            <person name="Sugano S."/>
        </authorList>
    </citation>
    <scope>NUCLEOTIDE SEQUENCE [LARGE SCALE MRNA]</scope>
</reference>
<reference key="2">
    <citation type="journal article" date="2005" name="Nature">
        <title>Generation and annotation of the DNA sequences of human chromosomes 2 and 4.</title>
        <authorList>
            <person name="Hillier L.W."/>
            <person name="Graves T.A."/>
            <person name="Fulton R.S."/>
            <person name="Fulton L.A."/>
            <person name="Pepin K.H."/>
            <person name="Minx P."/>
            <person name="Wagner-McPherson C."/>
            <person name="Layman D."/>
            <person name="Wylie K."/>
            <person name="Sekhon M."/>
            <person name="Becker M.C."/>
            <person name="Fewell G.A."/>
            <person name="Delehaunty K.D."/>
            <person name="Miner T.L."/>
            <person name="Nash W.E."/>
            <person name="Kremitzki C."/>
            <person name="Oddy L."/>
            <person name="Du H."/>
            <person name="Sun H."/>
            <person name="Bradshaw-Cordum H."/>
            <person name="Ali J."/>
            <person name="Carter J."/>
            <person name="Cordes M."/>
            <person name="Harris A."/>
            <person name="Isak A."/>
            <person name="van Brunt A."/>
            <person name="Nguyen C."/>
            <person name="Du F."/>
            <person name="Courtney L."/>
            <person name="Kalicki J."/>
            <person name="Ozersky P."/>
            <person name="Abbott S."/>
            <person name="Armstrong J."/>
            <person name="Belter E.A."/>
            <person name="Caruso L."/>
            <person name="Cedroni M."/>
            <person name="Cotton M."/>
            <person name="Davidson T."/>
            <person name="Desai A."/>
            <person name="Elliott G."/>
            <person name="Erb T."/>
            <person name="Fronick C."/>
            <person name="Gaige T."/>
            <person name="Haakenson W."/>
            <person name="Haglund K."/>
            <person name="Holmes A."/>
            <person name="Harkins R."/>
            <person name="Kim K."/>
            <person name="Kruchowski S.S."/>
            <person name="Strong C.M."/>
            <person name="Grewal N."/>
            <person name="Goyea E."/>
            <person name="Hou S."/>
            <person name="Levy A."/>
            <person name="Martinka S."/>
            <person name="Mead K."/>
            <person name="McLellan M.D."/>
            <person name="Meyer R."/>
            <person name="Randall-Maher J."/>
            <person name="Tomlinson C."/>
            <person name="Dauphin-Kohlberg S."/>
            <person name="Kozlowicz-Reilly A."/>
            <person name="Shah N."/>
            <person name="Swearengen-Shahid S."/>
            <person name="Snider J."/>
            <person name="Strong J.T."/>
            <person name="Thompson J."/>
            <person name="Yoakum M."/>
            <person name="Leonard S."/>
            <person name="Pearman C."/>
            <person name="Trani L."/>
            <person name="Radionenko M."/>
            <person name="Waligorski J.E."/>
            <person name="Wang C."/>
            <person name="Rock S.M."/>
            <person name="Tin-Wollam A.-M."/>
            <person name="Maupin R."/>
            <person name="Latreille P."/>
            <person name="Wendl M.C."/>
            <person name="Yang S.-P."/>
            <person name="Pohl C."/>
            <person name="Wallis J.W."/>
            <person name="Spieth J."/>
            <person name="Bieri T.A."/>
            <person name="Berkowicz N."/>
            <person name="Nelson J.O."/>
            <person name="Osborne J."/>
            <person name="Ding L."/>
            <person name="Meyer R."/>
            <person name="Sabo A."/>
            <person name="Shotland Y."/>
            <person name="Sinha P."/>
            <person name="Wohldmann P.E."/>
            <person name="Cook L.L."/>
            <person name="Hickenbotham M.T."/>
            <person name="Eldred J."/>
            <person name="Williams D."/>
            <person name="Jones T.A."/>
            <person name="She X."/>
            <person name="Ciccarelli F.D."/>
            <person name="Izaurralde E."/>
            <person name="Taylor J."/>
            <person name="Schmutz J."/>
            <person name="Myers R.M."/>
            <person name="Cox D.R."/>
            <person name="Huang X."/>
            <person name="McPherson J.D."/>
            <person name="Mardis E.R."/>
            <person name="Clifton S.W."/>
            <person name="Warren W.C."/>
            <person name="Chinwalla A.T."/>
            <person name="Eddy S.R."/>
            <person name="Marra M.A."/>
            <person name="Ovcharenko I."/>
            <person name="Furey T.S."/>
            <person name="Miller W."/>
            <person name="Eichler E.E."/>
            <person name="Bork P."/>
            <person name="Suyama M."/>
            <person name="Torrents D."/>
            <person name="Waterston R.H."/>
            <person name="Wilson R.K."/>
        </authorList>
    </citation>
    <scope>NUCLEOTIDE SEQUENCE [LARGE SCALE GENOMIC DNA]</scope>
</reference>
<reference key="3">
    <citation type="journal article" date="2013" name="Dev. Cell">
        <title>ELABELA: a hormone essential for heart development signals via the apelin receptor.</title>
        <authorList>
            <person name="Chng S.C."/>
            <person name="Ho L."/>
            <person name="Tian J."/>
            <person name="Reversade B."/>
        </authorList>
    </citation>
    <scope>INTERACTION WITH APLNR</scope>
    <scope>SUBCELLULAR LOCATION</scope>
    <scope>SIGNAL SEQUENCE CLEAVAGE SITE</scope>
    <scope>TISSUE SPECIFICITY</scope>
</reference>
<reference key="4">
    <citation type="journal article" date="2015" name="Sci. Rep.">
        <title>Elabela-apelin receptor signaling pathway is functional in mammalian systems.</title>
        <authorList>
            <person name="Wang Z."/>
            <person name="Yu D."/>
            <person name="Wang M."/>
            <person name="Wang Q."/>
            <person name="Kouznetsova J."/>
            <person name="Yang R."/>
            <person name="Qian K."/>
            <person name="Wu W."/>
            <person name="Shuldiner A."/>
            <person name="Sztalryd C."/>
            <person name="Zou M."/>
            <person name="Zheng W."/>
            <person name="Gong D.W."/>
        </authorList>
    </citation>
    <scope>FUNCTION</scope>
    <scope>TISSUE SPECIFICITY</scope>
</reference>
<reference key="5">
    <citation type="journal article" date="2017" name="Circulation">
        <title>Elabela/Toddler is an endogenous agonist of the apelin APJ receptor in the adult cardiovascular system, and exogenous administration of the peptide compensates for the downregulation of its expression in pulmonary arterial hypertension.</title>
        <authorList>
            <person name="Yang P."/>
            <person name="Read C."/>
            <person name="Kuc R.E."/>
            <person name="Buonincontri G."/>
            <person name="Southwood M."/>
            <person name="Torella R."/>
            <person name="Upton P.D."/>
            <person name="Crosby A."/>
            <person name="Sawiak S.J."/>
            <person name="Carpenter T.A."/>
            <person name="Glen R.C."/>
            <person name="Morrell N.W."/>
            <person name="Maguire J.J."/>
            <person name="Davenport A.P."/>
        </authorList>
    </citation>
    <scope>FUNCTION</scope>
    <scope>SUBCELLULAR LOCATION</scope>
    <scope>TISSUE SPECIFICITY</scope>
</reference>
<reference key="6">
    <citation type="journal article" date="2017" name="Science">
        <title>ELABELA deficiency promotes preeclampsia and cardiovascular malformations in mice.</title>
        <authorList>
            <person name="Ho L."/>
            <person name="van Dijk M."/>
            <person name="Chye S.T.J."/>
            <person name="Messerschmidt D.M."/>
            <person name="Chng S.C."/>
            <person name="Ong S."/>
            <person name="Yi L.K."/>
            <person name="Boussata S."/>
            <person name="Goh G.H."/>
            <person name="Afink G.B."/>
            <person name="Lim C.Y."/>
            <person name="Dunn N.R."/>
            <person name="Solter D."/>
            <person name="Knowles B.B."/>
            <person name="Reversade B."/>
        </authorList>
    </citation>
    <scope>TISSUE SPECIFICITY</scope>
</reference>
<reference evidence="13 14 15" key="7">
    <citation type="journal article" date="2022" name="Nat. Struct. Mol. Biol.">
        <title>Structural insight into apelin receptor-G protein stoichiometry.</title>
        <authorList>
            <person name="Yue Y."/>
            <person name="Liu L."/>
            <person name="Wu L.J."/>
            <person name="Wu Y."/>
            <person name="Wang L."/>
            <person name="Li F."/>
            <person name="Liu J."/>
            <person name="Han G.W."/>
            <person name="Chen B."/>
            <person name="Lin X."/>
            <person name="Brouillette R.L."/>
            <person name="Breault E."/>
            <person name="Longpre J.M."/>
            <person name="Shi S."/>
            <person name="Lei H."/>
            <person name="Sarret P."/>
            <person name="Stevens R.C."/>
            <person name="Hanson M.A."/>
            <person name="Xu F."/>
        </authorList>
    </citation>
    <scope>STRUCTURE BY ELECTRON MICROSCOPY (3.16 ANGSTROMS) OF 23-54 IN COMPLEX WITH APLNR AND G PROTEINS</scope>
    <scope>FUNCTION</scope>
    <scope>SUBCELLULAR LOCATION</scope>
</reference>
<protein>
    <recommendedName>
        <fullName evidence="12">Apelin receptor early endogenous ligand</fullName>
    </recommendedName>
    <alternativeName>
        <fullName evidence="1">Protein Elabela</fullName>
        <shortName evidence="1">ELA</shortName>
    </alternativeName>
    <alternativeName>
        <fullName evidence="1">Protein Toddler</fullName>
    </alternativeName>
</protein>
<comment type="function">
    <text evidence="1 2 3 6 7 9">Peptide hormone that functions as endogenous ligand for the G-protein-coupled apelin receptor (APLNR/APJ), that plays a role in the regulation of normal cardiovascular function and fluid homeostasis (PubMed:25639753, PubMed:28137936, PubMed:35817871). Functions as a balanced agonist activating both G(i) protein pathway and beta-arrestin pathway of APLNR (PubMed:35817871). Downstream G proteins activation, apelin can inhibit cAMP production and activate key intracellular effectors such as ERKs (PubMed:35817871). On the other hand, APLNR activation induces beta-arrestin recruitment to the membrane leading to desensitization and internalization of the receptor (PubMed:35817871). Required for mesendodermal differentiation, blood vessels formation and heart morphogenesis during early development and for adult cardiovascular homeostasis (PubMed:25639753, PubMed:28137936). Acts as a motogen by promoting mesendodermal cell migration during gastrulation by binding and activating APLNR. Acts as an early embryonic regulator of cellular movement with a role in migration and development of cardiac progenitor cells. May act as a chemoattractant for the activation of angioblast migration toward the embryonic midline, i.e. the position of the future vessel formation, during vasculogenesis. Positively regulates sinus venosus (SV)-derived endothelial cells migration into the developing heart to promote coronary blood vessel sprouting. Plays a role in placental vascular development; promotes placental trophoblast invasion and spiral artery remodeling in the uterus. Involved in the regulation of maternal cardiovascular homeostasis to prevent gestational hypertension and for potent cardioprotective functions during heart failure. Mediates myocardial contractility in an ERK1/2-dependent manner (By similarity).</text>
</comment>
<comment type="subunit">
    <text evidence="5">Interacts with APLNR (PubMed:24316148).</text>
</comment>
<comment type="subcellular location">
    <subcellularLocation>
        <location evidence="5 7">Secreted</location>
    </subcellularLocation>
    <subcellularLocation>
        <location evidence="7">Secreted</location>
        <location evidence="7">Extracellular space</location>
    </subcellularLocation>
    <text evidence="2">Found in blood plasma (PubMed:28137936). Found in serum of pregnant mice, peaking at midgestation; indicating a maternal and zygotic origin of circulating APELA during pregnancy (By similarity).</text>
</comment>
<comment type="tissue specificity">
    <text evidence="5 6 7 8">Expressed in the intima of blood vessels (PubMed:28137936). Expressed in endothelial cells in blood vessels in the heart and lung (PubMed:28137936). Expressed in cytotrophoblasts and syncytiotrophoblasts of first-trimester placental tissue and term placentas (at protein level) (PubMed:28663440). Not detected in smooth muscle cells or cardiomyocytes (at protein level) (PubMed:28137936). Expressed in kidney (PubMed:25639753). Expressed in blood vessels (PubMed:28137936). Expressed in embryonic (ESCs) and induced (iPSCs) pluripotent stem cells (PubMed:25639753). Most highly expressed in undifferentiated embryonic stem cell and is rapidly down-regulated during differentiation (PubMed:24316148).</text>
</comment>
<comment type="similarity">
    <text evidence="10">Belongs to the Elabela/Toddler family.</text>
</comment>
<sequence length="54" mass="6622">MRFQQFLFAFFIFIMSLLLISGQRPVNLTMRRKLRKHNCLQRRCMPLHSRVPFP</sequence>
<accession>P0DMC3</accession>